<gene>
    <name evidence="1" type="primary">rpmJ</name>
    <name type="ordered locus">Daci_3651</name>
</gene>
<organism>
    <name type="scientific">Delftia acidovorans (strain DSM 14801 / SPH-1)</name>
    <dbReference type="NCBI Taxonomy" id="398578"/>
    <lineage>
        <taxon>Bacteria</taxon>
        <taxon>Pseudomonadati</taxon>
        <taxon>Pseudomonadota</taxon>
        <taxon>Betaproteobacteria</taxon>
        <taxon>Burkholderiales</taxon>
        <taxon>Comamonadaceae</taxon>
        <taxon>Delftia</taxon>
    </lineage>
</organism>
<keyword id="KW-1185">Reference proteome</keyword>
<keyword id="KW-0687">Ribonucleoprotein</keyword>
<keyword id="KW-0689">Ribosomal protein</keyword>
<proteinExistence type="inferred from homology"/>
<protein>
    <recommendedName>
        <fullName evidence="1">Large ribosomal subunit protein bL36</fullName>
    </recommendedName>
    <alternativeName>
        <fullName evidence="2">50S ribosomal protein L36</fullName>
    </alternativeName>
</protein>
<accession>A9C021</accession>
<feature type="chain" id="PRO_1000101023" description="Large ribosomal subunit protein bL36">
    <location>
        <begin position="1"/>
        <end position="49"/>
    </location>
</feature>
<comment type="similarity">
    <text evidence="1">Belongs to the bacterial ribosomal protein bL36 family.</text>
</comment>
<evidence type="ECO:0000255" key="1">
    <source>
        <dbReference type="HAMAP-Rule" id="MF_00251"/>
    </source>
</evidence>
<evidence type="ECO:0000305" key="2"/>
<dbReference type="EMBL" id="CP000884">
    <property type="protein sequence ID" value="ABX36283.1"/>
    <property type="molecule type" value="Genomic_DNA"/>
</dbReference>
<dbReference type="SMR" id="A9C021"/>
<dbReference type="STRING" id="398578.Daci_3651"/>
<dbReference type="GeneID" id="24119025"/>
<dbReference type="KEGG" id="dac:Daci_3651"/>
<dbReference type="eggNOG" id="COG0257">
    <property type="taxonomic scope" value="Bacteria"/>
</dbReference>
<dbReference type="HOGENOM" id="CLU_135723_3_2_4"/>
<dbReference type="Proteomes" id="UP000000784">
    <property type="component" value="Chromosome"/>
</dbReference>
<dbReference type="GO" id="GO:1990904">
    <property type="term" value="C:ribonucleoprotein complex"/>
    <property type="evidence" value="ECO:0007669"/>
    <property type="project" value="UniProtKB-KW"/>
</dbReference>
<dbReference type="GO" id="GO:0005840">
    <property type="term" value="C:ribosome"/>
    <property type="evidence" value="ECO:0007669"/>
    <property type="project" value="UniProtKB-KW"/>
</dbReference>
<dbReference type="GO" id="GO:0003735">
    <property type="term" value="F:structural constituent of ribosome"/>
    <property type="evidence" value="ECO:0007669"/>
    <property type="project" value="InterPro"/>
</dbReference>
<dbReference type="GO" id="GO:0006412">
    <property type="term" value="P:translation"/>
    <property type="evidence" value="ECO:0007669"/>
    <property type="project" value="UniProtKB-UniRule"/>
</dbReference>
<dbReference type="HAMAP" id="MF_00251">
    <property type="entry name" value="Ribosomal_bL36"/>
    <property type="match status" value="1"/>
</dbReference>
<dbReference type="InterPro" id="IPR000473">
    <property type="entry name" value="Ribosomal_bL36"/>
</dbReference>
<dbReference type="InterPro" id="IPR035977">
    <property type="entry name" value="Ribosomal_bL36_sp"/>
</dbReference>
<dbReference type="InterPro" id="IPR047621">
    <property type="entry name" value="Ribosomal_L36_bact"/>
</dbReference>
<dbReference type="NCBIfam" id="NF002021">
    <property type="entry name" value="PRK00831.1"/>
    <property type="match status" value="1"/>
</dbReference>
<dbReference type="NCBIfam" id="TIGR01022">
    <property type="entry name" value="rpmJ_bact"/>
    <property type="match status" value="1"/>
</dbReference>
<dbReference type="PANTHER" id="PTHR47781">
    <property type="entry name" value="50S RIBOSOMAL PROTEIN L36 2"/>
    <property type="match status" value="1"/>
</dbReference>
<dbReference type="PANTHER" id="PTHR47781:SF1">
    <property type="entry name" value="LARGE RIBOSOMAL SUBUNIT PROTEIN BL36B"/>
    <property type="match status" value="1"/>
</dbReference>
<dbReference type="Pfam" id="PF00444">
    <property type="entry name" value="Ribosomal_L36"/>
    <property type="match status" value="1"/>
</dbReference>
<dbReference type="SUPFAM" id="SSF57840">
    <property type="entry name" value="Ribosomal protein L36"/>
    <property type="match status" value="1"/>
</dbReference>
<dbReference type="PROSITE" id="PS00828">
    <property type="entry name" value="RIBOSOMAL_L36"/>
    <property type="match status" value="1"/>
</dbReference>
<reference key="1">
    <citation type="submission" date="2007-11" db="EMBL/GenBank/DDBJ databases">
        <title>Complete sequence of Delftia acidovorans DSM 14801 / SPH-1.</title>
        <authorList>
            <person name="Copeland A."/>
            <person name="Lucas S."/>
            <person name="Lapidus A."/>
            <person name="Barry K."/>
            <person name="Glavina del Rio T."/>
            <person name="Dalin E."/>
            <person name="Tice H."/>
            <person name="Pitluck S."/>
            <person name="Lowry S."/>
            <person name="Clum A."/>
            <person name="Schmutz J."/>
            <person name="Larimer F."/>
            <person name="Land M."/>
            <person name="Hauser L."/>
            <person name="Kyrpides N."/>
            <person name="Kim E."/>
            <person name="Schleheck D."/>
            <person name="Richardson P."/>
        </authorList>
    </citation>
    <scope>NUCLEOTIDE SEQUENCE [LARGE SCALE GENOMIC DNA]</scope>
    <source>
        <strain>DSM 14801 / SPH-1</strain>
    </source>
</reference>
<name>RL36_DELAS</name>
<sequence length="49" mass="5781">MQVLSSLKEAKLRHRDCQVVRRRGRIYVICKSNPRFKARQGGARNRRKG</sequence>